<name>RBL_CABCA</name>
<organism>
    <name type="scientific">Cabomba caroliniana</name>
    <name type="common">Carolina fanwort</name>
    <dbReference type="NCBI Taxonomy" id="4426"/>
    <lineage>
        <taxon>Eukaryota</taxon>
        <taxon>Viridiplantae</taxon>
        <taxon>Streptophyta</taxon>
        <taxon>Embryophyta</taxon>
        <taxon>Tracheophyta</taxon>
        <taxon>Spermatophyta</taxon>
        <taxon>Magnoliopsida</taxon>
        <taxon>Nymphaeales</taxon>
        <taxon>Cabombaceae</taxon>
        <taxon>Cabomba</taxon>
    </lineage>
</organism>
<geneLocation type="chloroplast"/>
<reference key="1">
    <citation type="journal article" date="1991" name="Proc. Natl. Acad. Sci. U.S.A.">
        <title>Molecular evolutionary history of ancient aquatic angiosperms.</title>
        <authorList>
            <person name="Les D.H."/>
            <person name="Garvin D.K."/>
            <person name="Wimpee C.F."/>
        </authorList>
    </citation>
    <scope>NUCLEOTIDE SEQUENCE [GENOMIC DNA]</scope>
</reference>
<sequence>SVGFKAGVKDYRLTYYTPEYETLATDILAAFRVTPQPGVPPEEAGAAVAAESSTGTWTTVWTDGLTSLDRYKGRCYHIEPVAGEENQYIAYVAYPLDLFEEGSVTNMFTSIVGNVFGFKALRALRLEDLRIPPAYSKTFQGPPHGIQVERDKLNKYGRPLLGCTIKPKLGLSAKNYGRAVYECLRGGLDFTKDDENVNSQPFMRWRDRFLFCAEAIYKAQAETGEIKGHYLNATAGTSEEMMKRAACARELGVPIVMHDYLTGGFTANTSLSHYCRDNGLLLHIHRAMHAVIDRQKNHGIHFRVLAKALRMSGGDHIHSGTVVGKLEGERDVTLGFVDLLRDDFIEKDRSRGIYFTQDWVSMPGVLPVASGGIHVWHMPALTEIFGDDSVLQFG</sequence>
<dbReference type="EC" id="4.1.1.39"/>
<dbReference type="EMBL" id="M77027">
    <property type="protein sequence ID" value="AAA84098.1"/>
    <property type="molecule type" value="Genomic_DNA"/>
</dbReference>
<dbReference type="SMR" id="Q05797"/>
<dbReference type="GO" id="GO:0009507">
    <property type="term" value="C:chloroplast"/>
    <property type="evidence" value="ECO:0007669"/>
    <property type="project" value="UniProtKB-SubCell"/>
</dbReference>
<dbReference type="GO" id="GO:0000287">
    <property type="term" value="F:magnesium ion binding"/>
    <property type="evidence" value="ECO:0007669"/>
    <property type="project" value="InterPro"/>
</dbReference>
<dbReference type="GO" id="GO:0004497">
    <property type="term" value="F:monooxygenase activity"/>
    <property type="evidence" value="ECO:0007669"/>
    <property type="project" value="UniProtKB-KW"/>
</dbReference>
<dbReference type="GO" id="GO:0016984">
    <property type="term" value="F:ribulose-bisphosphate carboxylase activity"/>
    <property type="evidence" value="ECO:0007669"/>
    <property type="project" value="UniProtKB-EC"/>
</dbReference>
<dbReference type="GO" id="GO:0009853">
    <property type="term" value="P:photorespiration"/>
    <property type="evidence" value="ECO:0007669"/>
    <property type="project" value="UniProtKB-KW"/>
</dbReference>
<dbReference type="GO" id="GO:0019253">
    <property type="term" value="P:reductive pentose-phosphate cycle"/>
    <property type="evidence" value="ECO:0007669"/>
    <property type="project" value="UniProtKB-KW"/>
</dbReference>
<dbReference type="FunFam" id="3.30.70.150:FF:000001">
    <property type="entry name" value="Ribulose bisphosphate carboxylase large chain"/>
    <property type="match status" value="1"/>
</dbReference>
<dbReference type="Gene3D" id="3.20.20.110">
    <property type="entry name" value="Ribulose bisphosphate carboxylase, large subunit, C-terminal domain"/>
    <property type="match status" value="1"/>
</dbReference>
<dbReference type="Gene3D" id="3.30.70.150">
    <property type="entry name" value="RuBisCO large subunit, N-terminal domain"/>
    <property type="match status" value="1"/>
</dbReference>
<dbReference type="InterPro" id="IPR033966">
    <property type="entry name" value="RuBisCO"/>
</dbReference>
<dbReference type="InterPro" id="IPR020878">
    <property type="entry name" value="RuBisCo_large_chain_AS"/>
</dbReference>
<dbReference type="InterPro" id="IPR000685">
    <property type="entry name" value="RuBisCO_lsu_C"/>
</dbReference>
<dbReference type="InterPro" id="IPR036376">
    <property type="entry name" value="RuBisCO_lsu_C_sf"/>
</dbReference>
<dbReference type="InterPro" id="IPR017443">
    <property type="entry name" value="RuBisCO_lsu_fd_N"/>
</dbReference>
<dbReference type="InterPro" id="IPR036422">
    <property type="entry name" value="RuBisCO_lsu_N_sf"/>
</dbReference>
<dbReference type="NCBIfam" id="NF003252">
    <property type="entry name" value="PRK04208.1"/>
    <property type="match status" value="1"/>
</dbReference>
<dbReference type="PANTHER" id="PTHR42704">
    <property type="entry name" value="RIBULOSE BISPHOSPHATE CARBOXYLASE"/>
    <property type="match status" value="1"/>
</dbReference>
<dbReference type="PANTHER" id="PTHR42704:SF19">
    <property type="entry name" value="RIBULOSE BISPHOSPHATE CARBOXYLASE LARGE CHAIN"/>
    <property type="match status" value="1"/>
</dbReference>
<dbReference type="Pfam" id="PF00016">
    <property type="entry name" value="RuBisCO_large"/>
    <property type="match status" value="1"/>
</dbReference>
<dbReference type="Pfam" id="PF02788">
    <property type="entry name" value="RuBisCO_large_N"/>
    <property type="match status" value="1"/>
</dbReference>
<dbReference type="SFLD" id="SFLDS00014">
    <property type="entry name" value="RuBisCO"/>
    <property type="match status" value="1"/>
</dbReference>
<dbReference type="SFLD" id="SFLDG00301">
    <property type="entry name" value="RuBisCO-like_proteins"/>
    <property type="match status" value="1"/>
</dbReference>
<dbReference type="SUPFAM" id="SSF51649">
    <property type="entry name" value="RuBisCo, C-terminal domain"/>
    <property type="match status" value="1"/>
</dbReference>
<dbReference type="SUPFAM" id="SSF54966">
    <property type="entry name" value="RuBisCO, large subunit, small (N-terminal) domain"/>
    <property type="match status" value="1"/>
</dbReference>
<dbReference type="PROSITE" id="PS00157">
    <property type="entry name" value="RUBISCO_LARGE"/>
    <property type="match status" value="1"/>
</dbReference>
<gene>
    <name type="primary">rbcL</name>
</gene>
<comment type="function">
    <text evidence="1">RuBisCO catalyzes two reactions: the carboxylation of D-ribulose 1,5-bisphosphate, the primary event in carbon dioxide fixation, as well as the oxidative fragmentation of the pentose substrate in the photorespiration process. Both reactions occur simultaneously and in competition at the same active site (By similarity).</text>
</comment>
<comment type="catalytic activity">
    <reaction>
        <text>2 (2R)-3-phosphoglycerate + 2 H(+) = D-ribulose 1,5-bisphosphate + CO2 + H2O</text>
        <dbReference type="Rhea" id="RHEA:23124"/>
        <dbReference type="ChEBI" id="CHEBI:15377"/>
        <dbReference type="ChEBI" id="CHEBI:15378"/>
        <dbReference type="ChEBI" id="CHEBI:16526"/>
        <dbReference type="ChEBI" id="CHEBI:57870"/>
        <dbReference type="ChEBI" id="CHEBI:58272"/>
        <dbReference type="EC" id="4.1.1.39"/>
    </reaction>
</comment>
<comment type="catalytic activity">
    <reaction>
        <text>D-ribulose 1,5-bisphosphate + O2 = 2-phosphoglycolate + (2R)-3-phosphoglycerate + 2 H(+)</text>
        <dbReference type="Rhea" id="RHEA:36631"/>
        <dbReference type="ChEBI" id="CHEBI:15378"/>
        <dbReference type="ChEBI" id="CHEBI:15379"/>
        <dbReference type="ChEBI" id="CHEBI:57870"/>
        <dbReference type="ChEBI" id="CHEBI:58033"/>
        <dbReference type="ChEBI" id="CHEBI:58272"/>
    </reaction>
</comment>
<comment type="cofactor">
    <cofactor evidence="1">
        <name>Mg(2+)</name>
        <dbReference type="ChEBI" id="CHEBI:18420"/>
    </cofactor>
    <text evidence="1">Binds 1 Mg(2+) ion per subunit.</text>
</comment>
<comment type="subunit">
    <text evidence="1">Heterohexadecamer of 8 large chains and 8 small chains.</text>
</comment>
<comment type="subcellular location">
    <subcellularLocation>
        <location>Plastid</location>
        <location>Chloroplast</location>
    </subcellularLocation>
</comment>
<comment type="miscellaneous">
    <text evidence="1">The basic functional RuBisCO is composed of a large chain homodimer in a 'head-to-tail' conformation. In form I RuBisCO this homodimer is arranged in a barrel-like tetramer with the small subunits forming a tetrameric 'cap' on each end of the 'barrel' (By similarity).</text>
</comment>
<comment type="similarity">
    <text evidence="3">Belongs to the RuBisCO large chain family. Type I subfamily.</text>
</comment>
<protein>
    <recommendedName>
        <fullName>Ribulose bisphosphate carboxylase large chain</fullName>
        <shortName>RuBisCO large subunit</shortName>
        <ecNumber>4.1.1.39</ecNumber>
    </recommendedName>
</protein>
<feature type="chain" id="PRO_0000062388" description="Ribulose bisphosphate carboxylase large chain">
    <location>
        <begin position="1" status="less than"/>
        <end position="394" status="greater than"/>
    </location>
</feature>
<feature type="active site" description="Proton acceptor" evidence="1">
    <location>
        <position position="166"/>
    </location>
</feature>
<feature type="active site" description="Proton acceptor" evidence="1">
    <location>
        <position position="285"/>
    </location>
</feature>
<feature type="binding site" description="in homodimeric partner" evidence="1">
    <location>
        <position position="114"/>
    </location>
    <ligand>
        <name>substrate</name>
    </ligand>
</feature>
<feature type="binding site" evidence="1">
    <location>
        <position position="164"/>
    </location>
    <ligand>
        <name>substrate</name>
    </ligand>
</feature>
<feature type="binding site" evidence="1">
    <location>
        <position position="168"/>
    </location>
    <ligand>
        <name>substrate</name>
    </ligand>
</feature>
<feature type="binding site" description="via carbamate group" evidence="2">
    <location>
        <position position="192"/>
    </location>
    <ligand>
        <name>Mg(2+)</name>
        <dbReference type="ChEBI" id="CHEBI:18420"/>
    </ligand>
</feature>
<feature type="binding site" evidence="2">
    <location>
        <position position="194"/>
    </location>
    <ligand>
        <name>Mg(2+)</name>
        <dbReference type="ChEBI" id="CHEBI:18420"/>
    </ligand>
</feature>
<feature type="binding site" evidence="2">
    <location>
        <position position="195"/>
    </location>
    <ligand>
        <name>Mg(2+)</name>
        <dbReference type="ChEBI" id="CHEBI:18420"/>
    </ligand>
</feature>
<feature type="binding site" evidence="1">
    <location>
        <position position="286"/>
    </location>
    <ligand>
        <name>substrate</name>
    </ligand>
</feature>
<feature type="binding site" evidence="1">
    <location>
        <position position="318"/>
    </location>
    <ligand>
        <name>substrate</name>
    </ligand>
</feature>
<feature type="binding site" evidence="1">
    <location>
        <position position="370"/>
    </location>
    <ligand>
        <name>substrate</name>
    </ligand>
</feature>
<feature type="site" description="Transition state stabilizer" evidence="1">
    <location>
        <position position="325"/>
    </location>
</feature>
<feature type="modified residue" description="N6,N6,N6-trimethyllysine" evidence="1">
    <location>
        <position position="5"/>
    </location>
</feature>
<feature type="modified residue" description="N6-carboxylysine" evidence="2">
    <location>
        <position position="192"/>
    </location>
</feature>
<feature type="non-terminal residue">
    <location>
        <position position="1"/>
    </location>
</feature>
<feature type="non-terminal residue">
    <location>
        <position position="394"/>
    </location>
</feature>
<accession>Q05797</accession>
<keyword id="KW-0113">Calvin cycle</keyword>
<keyword id="KW-0120">Carbon dioxide fixation</keyword>
<keyword id="KW-0150">Chloroplast</keyword>
<keyword id="KW-0456">Lyase</keyword>
<keyword id="KW-0460">Magnesium</keyword>
<keyword id="KW-0479">Metal-binding</keyword>
<keyword id="KW-0488">Methylation</keyword>
<keyword id="KW-0503">Monooxygenase</keyword>
<keyword id="KW-0560">Oxidoreductase</keyword>
<keyword id="KW-0601">Photorespiration</keyword>
<keyword id="KW-0602">Photosynthesis</keyword>
<keyword id="KW-0934">Plastid</keyword>
<evidence type="ECO:0000250" key="1"/>
<evidence type="ECO:0000255" key="2">
    <source>
        <dbReference type="PROSITE-ProRule" id="PRU10114"/>
    </source>
</evidence>
<evidence type="ECO:0000305" key="3"/>
<proteinExistence type="inferred from homology"/>